<name>PYRE_AGARV</name>
<reference key="1">
    <citation type="journal article" date="2009" name="Proc. Natl. Acad. Sci. U.S.A.">
        <title>Characterizing a model human gut microbiota composed of members of its two dominant bacterial phyla.</title>
        <authorList>
            <person name="Mahowald M.A."/>
            <person name="Rey F.E."/>
            <person name="Seedorf H."/>
            <person name="Turnbaugh P.J."/>
            <person name="Fulton R.S."/>
            <person name="Wollam A."/>
            <person name="Shah N."/>
            <person name="Wang C."/>
            <person name="Magrini V."/>
            <person name="Wilson R.K."/>
            <person name="Cantarel B.L."/>
            <person name="Coutinho P.M."/>
            <person name="Henrissat B."/>
            <person name="Crock L.W."/>
            <person name="Russell A."/>
            <person name="Verberkmoes N.C."/>
            <person name="Hettich R.L."/>
            <person name="Gordon J.I."/>
        </authorList>
    </citation>
    <scope>NUCLEOTIDE SEQUENCE [LARGE SCALE GENOMIC DNA]</scope>
    <source>
        <strain>ATCC 33656 / DSM 3377 / JCM 17463 / KCTC 5835 / LMG 30912 / VPI 0990</strain>
    </source>
</reference>
<keyword id="KW-0328">Glycosyltransferase</keyword>
<keyword id="KW-0460">Magnesium</keyword>
<keyword id="KW-0665">Pyrimidine biosynthesis</keyword>
<keyword id="KW-0808">Transferase</keyword>
<comment type="function">
    <text evidence="1">Catalyzes the transfer of a ribosyl phosphate group from 5-phosphoribose 1-diphosphate to orotate, leading to the formation of orotidine monophosphate (OMP).</text>
</comment>
<comment type="catalytic activity">
    <reaction evidence="1">
        <text>orotidine 5'-phosphate + diphosphate = orotate + 5-phospho-alpha-D-ribose 1-diphosphate</text>
        <dbReference type="Rhea" id="RHEA:10380"/>
        <dbReference type="ChEBI" id="CHEBI:30839"/>
        <dbReference type="ChEBI" id="CHEBI:33019"/>
        <dbReference type="ChEBI" id="CHEBI:57538"/>
        <dbReference type="ChEBI" id="CHEBI:58017"/>
        <dbReference type="EC" id="2.4.2.10"/>
    </reaction>
</comment>
<comment type="cofactor">
    <cofactor evidence="1">
        <name>Mg(2+)</name>
        <dbReference type="ChEBI" id="CHEBI:18420"/>
    </cofactor>
</comment>
<comment type="pathway">
    <text evidence="1">Pyrimidine metabolism; UMP biosynthesis via de novo pathway; UMP from orotate: step 1/2.</text>
</comment>
<comment type="subunit">
    <text evidence="1">Homodimer.</text>
</comment>
<comment type="similarity">
    <text evidence="1">Belongs to the purine/pyrimidine phosphoribosyltransferase family. PyrE subfamily.</text>
</comment>
<sequence length="226" mass="25162">MESYKSEFIDFMVESDVLKFGDFTLKSGRKSPFFMNAGAYVTGSQLKRLGEYYAKAIHANYGDDFDVLFGPAYKGIPLAVVTAIAYHELYGKEVRYCSDRKEAKDHGADKGGFLGSKLKDGDRVVMIEDVTTSGKSMEETVPKVRGAADVTIVGLMVSLNRMEVGQGGKVSALDEIHEKYGFEGKAIVTMEEVTEYLYNREHDGRVVIDDTIKAAIDEYYKQYGCK</sequence>
<organism>
    <name type="scientific">Agathobacter rectalis (strain ATCC 33656 / DSM 3377 / JCM 17463 / KCTC 5835 / VPI 0990)</name>
    <name type="common">Eubacterium rectale</name>
    <dbReference type="NCBI Taxonomy" id="515619"/>
    <lineage>
        <taxon>Bacteria</taxon>
        <taxon>Bacillati</taxon>
        <taxon>Bacillota</taxon>
        <taxon>Clostridia</taxon>
        <taxon>Lachnospirales</taxon>
        <taxon>Lachnospiraceae</taxon>
        <taxon>Agathobacter</taxon>
    </lineage>
</organism>
<proteinExistence type="inferred from homology"/>
<protein>
    <recommendedName>
        <fullName evidence="1">Orotate phosphoribosyltransferase</fullName>
        <shortName evidence="1">OPRT</shortName>
        <shortName evidence="1">OPRTase</shortName>
        <ecNumber evidence="1">2.4.2.10</ecNumber>
    </recommendedName>
</protein>
<accession>C4ZF78</accession>
<dbReference type="EC" id="2.4.2.10" evidence="1"/>
<dbReference type="EMBL" id="CP001107">
    <property type="protein sequence ID" value="ACR76199.1"/>
    <property type="molecule type" value="Genomic_DNA"/>
</dbReference>
<dbReference type="RefSeq" id="WP_012743292.1">
    <property type="nucleotide sequence ID" value="NC_012781.1"/>
</dbReference>
<dbReference type="SMR" id="C4ZF78"/>
<dbReference type="STRING" id="515619.EUBREC_2468"/>
<dbReference type="PaxDb" id="515619-EUBREC_2468"/>
<dbReference type="GeneID" id="86989219"/>
<dbReference type="KEGG" id="ere:EUBREC_2468"/>
<dbReference type="HOGENOM" id="CLU_074878_0_1_9"/>
<dbReference type="UniPathway" id="UPA00070">
    <property type="reaction ID" value="UER00119"/>
</dbReference>
<dbReference type="Proteomes" id="UP000001477">
    <property type="component" value="Chromosome"/>
</dbReference>
<dbReference type="GO" id="GO:0005737">
    <property type="term" value="C:cytoplasm"/>
    <property type="evidence" value="ECO:0007669"/>
    <property type="project" value="TreeGrafter"/>
</dbReference>
<dbReference type="GO" id="GO:0000287">
    <property type="term" value="F:magnesium ion binding"/>
    <property type="evidence" value="ECO:0007669"/>
    <property type="project" value="UniProtKB-UniRule"/>
</dbReference>
<dbReference type="GO" id="GO:0004588">
    <property type="term" value="F:orotate phosphoribosyltransferase activity"/>
    <property type="evidence" value="ECO:0007669"/>
    <property type="project" value="UniProtKB-UniRule"/>
</dbReference>
<dbReference type="GO" id="GO:0006207">
    <property type="term" value="P:'de novo' pyrimidine nucleobase biosynthetic process"/>
    <property type="evidence" value="ECO:0007669"/>
    <property type="project" value="TreeGrafter"/>
</dbReference>
<dbReference type="GO" id="GO:0044205">
    <property type="term" value="P:'de novo' UMP biosynthetic process"/>
    <property type="evidence" value="ECO:0007669"/>
    <property type="project" value="UniProtKB-UniRule"/>
</dbReference>
<dbReference type="GO" id="GO:0046132">
    <property type="term" value="P:pyrimidine ribonucleoside biosynthetic process"/>
    <property type="evidence" value="ECO:0007669"/>
    <property type="project" value="TreeGrafter"/>
</dbReference>
<dbReference type="CDD" id="cd06223">
    <property type="entry name" value="PRTases_typeI"/>
    <property type="match status" value="1"/>
</dbReference>
<dbReference type="Gene3D" id="3.40.50.2020">
    <property type="match status" value="1"/>
</dbReference>
<dbReference type="HAMAP" id="MF_01208">
    <property type="entry name" value="PyrE"/>
    <property type="match status" value="1"/>
</dbReference>
<dbReference type="InterPro" id="IPR023031">
    <property type="entry name" value="OPRT"/>
</dbReference>
<dbReference type="InterPro" id="IPR004467">
    <property type="entry name" value="Or_phspho_trans_dom"/>
</dbReference>
<dbReference type="InterPro" id="IPR000836">
    <property type="entry name" value="PRibTrfase_dom"/>
</dbReference>
<dbReference type="InterPro" id="IPR029057">
    <property type="entry name" value="PRTase-like"/>
</dbReference>
<dbReference type="NCBIfam" id="TIGR00336">
    <property type="entry name" value="pyrE"/>
    <property type="match status" value="1"/>
</dbReference>
<dbReference type="PANTHER" id="PTHR46683">
    <property type="entry name" value="OROTATE PHOSPHORIBOSYLTRANSFERASE 1-RELATED"/>
    <property type="match status" value="1"/>
</dbReference>
<dbReference type="PANTHER" id="PTHR46683:SF1">
    <property type="entry name" value="OROTATE PHOSPHORIBOSYLTRANSFERASE 1-RELATED"/>
    <property type="match status" value="1"/>
</dbReference>
<dbReference type="Pfam" id="PF00156">
    <property type="entry name" value="Pribosyltran"/>
    <property type="match status" value="1"/>
</dbReference>
<dbReference type="SUPFAM" id="SSF53271">
    <property type="entry name" value="PRTase-like"/>
    <property type="match status" value="1"/>
</dbReference>
<gene>
    <name evidence="1" type="primary">pyrE</name>
    <name type="ordered locus">EUBREC_2468</name>
</gene>
<feature type="chain" id="PRO_1000213860" description="Orotate phosphoribosyltransferase">
    <location>
        <begin position="1"/>
        <end position="226"/>
    </location>
</feature>
<feature type="binding site" description="in other chain" evidence="1">
    <location>
        <position position="26"/>
    </location>
    <ligand>
        <name>5-phospho-alpha-D-ribose 1-diphosphate</name>
        <dbReference type="ChEBI" id="CHEBI:58017"/>
        <note>ligand shared between dimeric partners</note>
    </ligand>
</feature>
<feature type="binding site" description="in other chain" evidence="1">
    <location>
        <begin position="73"/>
        <end position="74"/>
    </location>
    <ligand>
        <name>5-phospho-alpha-D-ribose 1-diphosphate</name>
        <dbReference type="ChEBI" id="CHEBI:58017"/>
        <note>ligand shared between dimeric partners</note>
    </ligand>
</feature>
<feature type="binding site" evidence="1">
    <location>
        <position position="100"/>
    </location>
    <ligand>
        <name>5-phospho-alpha-D-ribose 1-diphosphate</name>
        <dbReference type="ChEBI" id="CHEBI:58017"/>
        <note>ligand shared between dimeric partners</note>
    </ligand>
</feature>
<feature type="binding site" description="in other chain" evidence="1">
    <location>
        <position position="101"/>
    </location>
    <ligand>
        <name>5-phospho-alpha-D-ribose 1-diphosphate</name>
        <dbReference type="ChEBI" id="CHEBI:58017"/>
        <note>ligand shared between dimeric partners</note>
    </ligand>
</feature>
<feature type="binding site" evidence="1">
    <location>
        <position position="104"/>
    </location>
    <ligand>
        <name>5-phospho-alpha-D-ribose 1-diphosphate</name>
        <dbReference type="ChEBI" id="CHEBI:58017"/>
        <note>ligand shared between dimeric partners</note>
    </ligand>
</feature>
<feature type="binding site" evidence="1">
    <location>
        <position position="106"/>
    </location>
    <ligand>
        <name>5-phospho-alpha-D-ribose 1-diphosphate</name>
        <dbReference type="ChEBI" id="CHEBI:58017"/>
        <note>ligand shared between dimeric partners</note>
    </ligand>
</feature>
<feature type="binding site" description="in other chain" evidence="1">
    <location>
        <begin position="128"/>
        <end position="136"/>
    </location>
    <ligand>
        <name>5-phospho-alpha-D-ribose 1-diphosphate</name>
        <dbReference type="ChEBI" id="CHEBI:58017"/>
        <note>ligand shared between dimeric partners</note>
    </ligand>
</feature>
<feature type="binding site" evidence="1">
    <location>
        <position position="132"/>
    </location>
    <ligand>
        <name>orotate</name>
        <dbReference type="ChEBI" id="CHEBI:30839"/>
    </ligand>
</feature>
<feature type="binding site" evidence="1">
    <location>
        <position position="161"/>
    </location>
    <ligand>
        <name>orotate</name>
        <dbReference type="ChEBI" id="CHEBI:30839"/>
    </ligand>
</feature>
<evidence type="ECO:0000255" key="1">
    <source>
        <dbReference type="HAMAP-Rule" id="MF_01208"/>
    </source>
</evidence>